<name>SP3E_BACSU</name>
<evidence type="ECO:0000255" key="1"/>
<evidence type="ECO:0000255" key="2">
    <source>
        <dbReference type="PROSITE-ProRule" id="PRU00289"/>
    </source>
</evidence>
<evidence type="ECO:0000256" key="3">
    <source>
        <dbReference type="SAM" id="MobiDB-lite"/>
    </source>
</evidence>
<evidence type="ECO:0000269" key="4">
    <source>
    </source>
</evidence>
<evidence type="ECO:0000269" key="5">
    <source>
    </source>
</evidence>
<evidence type="ECO:0000269" key="6">
    <source>
    </source>
</evidence>
<evidence type="ECO:0000269" key="7">
    <source>
    </source>
</evidence>
<evidence type="ECO:0000269" key="8">
    <source>
    </source>
</evidence>
<evidence type="ECO:0000269" key="9">
    <source>
    </source>
</evidence>
<evidence type="ECO:0000269" key="10">
    <source>
    </source>
</evidence>
<evidence type="ECO:0000269" key="11">
    <source>
    </source>
</evidence>
<evidence type="ECO:0000269" key="12">
    <source>
    </source>
</evidence>
<evidence type="ECO:0000269" key="13">
    <source>
    </source>
</evidence>
<evidence type="ECO:0000269" key="14">
    <source>
    </source>
</evidence>
<evidence type="ECO:0000269" key="15">
    <source>
    </source>
</evidence>
<evidence type="ECO:0000269" key="16">
    <source>
    </source>
</evidence>
<evidence type="ECO:0000269" key="17">
    <source>
    </source>
</evidence>
<evidence type="ECO:0000305" key="18"/>
<accession>P21458</accession>
<accession>P21459</accession>
<dbReference type="EMBL" id="M17445">
    <property type="protein sequence ID" value="AAA22784.1"/>
    <property type="status" value="ALT_SEQ"/>
    <property type="molecule type" value="mRNA"/>
</dbReference>
<dbReference type="EMBL" id="M17445">
    <property type="protein sequence ID" value="AAA22785.1"/>
    <property type="status" value="ALT_SEQ"/>
    <property type="molecule type" value="mRNA"/>
</dbReference>
<dbReference type="EMBL" id="AL009126">
    <property type="protein sequence ID" value="CAB13553.3"/>
    <property type="molecule type" value="Genomic_DNA"/>
</dbReference>
<dbReference type="PIR" id="S09411">
    <property type="entry name" value="S09411"/>
</dbReference>
<dbReference type="RefSeq" id="NP_389562.3">
    <property type="nucleotide sequence ID" value="NC_000964.3"/>
</dbReference>
<dbReference type="RefSeq" id="WP_003245350.1">
    <property type="nucleotide sequence ID" value="NZ_OZ025638.1"/>
</dbReference>
<dbReference type="SMR" id="P21458"/>
<dbReference type="FunCoup" id="P21458">
    <property type="interactions" value="289"/>
</dbReference>
<dbReference type="IntAct" id="P21458">
    <property type="interactions" value="1"/>
</dbReference>
<dbReference type="STRING" id="224308.BSU16800"/>
<dbReference type="TCDB" id="3.A.12.1.1">
    <property type="family name" value="the septal dna translocator (s-dna-t) family"/>
</dbReference>
<dbReference type="PaxDb" id="224308-BSU16800"/>
<dbReference type="EnsemblBacteria" id="CAB13553">
    <property type="protein sequence ID" value="CAB13553"/>
    <property type="gene ID" value="BSU_16800"/>
</dbReference>
<dbReference type="GeneID" id="936503"/>
<dbReference type="KEGG" id="bsu:BSU16800"/>
<dbReference type="PATRIC" id="fig|224308.179.peg.1823"/>
<dbReference type="eggNOG" id="COG1674">
    <property type="taxonomic scope" value="Bacteria"/>
</dbReference>
<dbReference type="eggNOG" id="COG4980">
    <property type="taxonomic scope" value="Bacteria"/>
</dbReference>
<dbReference type="InParanoid" id="P21458"/>
<dbReference type="OrthoDB" id="9807790at2"/>
<dbReference type="BioCyc" id="BSUB:BSU16800-MONOMER"/>
<dbReference type="Proteomes" id="UP000001570">
    <property type="component" value="Chromosome"/>
</dbReference>
<dbReference type="GO" id="GO:0005886">
    <property type="term" value="C:plasma membrane"/>
    <property type="evidence" value="ECO:0007669"/>
    <property type="project" value="UniProtKB-SubCell"/>
</dbReference>
<dbReference type="GO" id="GO:0005524">
    <property type="term" value="F:ATP binding"/>
    <property type="evidence" value="ECO:0007669"/>
    <property type="project" value="UniProtKB-KW"/>
</dbReference>
<dbReference type="GO" id="GO:0016887">
    <property type="term" value="F:ATP hydrolysis activity"/>
    <property type="evidence" value="ECO:0007669"/>
    <property type="project" value="InterPro"/>
</dbReference>
<dbReference type="GO" id="GO:0003677">
    <property type="term" value="F:DNA binding"/>
    <property type="evidence" value="ECO:0007669"/>
    <property type="project" value="UniProtKB-KW"/>
</dbReference>
<dbReference type="GO" id="GO:0015616">
    <property type="term" value="F:DNA translocase activity"/>
    <property type="evidence" value="ECO:0000318"/>
    <property type="project" value="GO_Central"/>
</dbReference>
<dbReference type="GO" id="GO:0051301">
    <property type="term" value="P:cell division"/>
    <property type="evidence" value="ECO:0007669"/>
    <property type="project" value="UniProtKB-KW"/>
</dbReference>
<dbReference type="GO" id="GO:0007059">
    <property type="term" value="P:chromosome segregation"/>
    <property type="evidence" value="ECO:0007669"/>
    <property type="project" value="UniProtKB-KW"/>
</dbReference>
<dbReference type="GO" id="GO:0030435">
    <property type="term" value="P:sporulation resulting in formation of a cellular spore"/>
    <property type="evidence" value="ECO:0007669"/>
    <property type="project" value="UniProtKB-KW"/>
</dbReference>
<dbReference type="CDD" id="cd01127">
    <property type="entry name" value="TrwB_TraG_TraD_VirD4"/>
    <property type="match status" value="1"/>
</dbReference>
<dbReference type="Gene3D" id="3.30.980.40">
    <property type="match status" value="1"/>
</dbReference>
<dbReference type="Gene3D" id="3.40.50.300">
    <property type="entry name" value="P-loop containing nucleotide triphosphate hydrolases"/>
    <property type="match status" value="1"/>
</dbReference>
<dbReference type="Gene3D" id="1.10.10.10">
    <property type="entry name" value="Winged helix-like DNA-binding domain superfamily/Winged helix DNA-binding domain"/>
    <property type="match status" value="1"/>
</dbReference>
<dbReference type="InterPro" id="IPR003593">
    <property type="entry name" value="AAA+_ATPase"/>
</dbReference>
<dbReference type="InterPro" id="IPR050206">
    <property type="entry name" value="FtsK/SpoIIIE/SftA"/>
</dbReference>
<dbReference type="InterPro" id="IPR041027">
    <property type="entry name" value="FtsK_alpha"/>
</dbReference>
<dbReference type="InterPro" id="IPR002543">
    <property type="entry name" value="FtsK_dom"/>
</dbReference>
<dbReference type="InterPro" id="IPR018541">
    <property type="entry name" value="Ftsk_gamma"/>
</dbReference>
<dbReference type="InterPro" id="IPR027417">
    <property type="entry name" value="P-loop_NTPase"/>
</dbReference>
<dbReference type="InterPro" id="IPR036388">
    <property type="entry name" value="WH-like_DNA-bd_sf"/>
</dbReference>
<dbReference type="InterPro" id="IPR036390">
    <property type="entry name" value="WH_DNA-bd_sf"/>
</dbReference>
<dbReference type="PANTHER" id="PTHR22683:SF41">
    <property type="entry name" value="DNA TRANSLOCASE FTSK"/>
    <property type="match status" value="1"/>
</dbReference>
<dbReference type="PANTHER" id="PTHR22683">
    <property type="entry name" value="SPORULATION PROTEIN RELATED"/>
    <property type="match status" value="1"/>
</dbReference>
<dbReference type="Pfam" id="PF17854">
    <property type="entry name" value="FtsK_alpha"/>
    <property type="match status" value="1"/>
</dbReference>
<dbReference type="Pfam" id="PF09397">
    <property type="entry name" value="FtsK_gamma"/>
    <property type="match status" value="1"/>
</dbReference>
<dbReference type="Pfam" id="PF01580">
    <property type="entry name" value="FtsK_SpoIIIE"/>
    <property type="match status" value="1"/>
</dbReference>
<dbReference type="SMART" id="SM00382">
    <property type="entry name" value="AAA"/>
    <property type="match status" value="1"/>
</dbReference>
<dbReference type="SMART" id="SM00843">
    <property type="entry name" value="Ftsk_gamma"/>
    <property type="match status" value="1"/>
</dbReference>
<dbReference type="SUPFAM" id="SSF52540">
    <property type="entry name" value="P-loop containing nucleoside triphosphate hydrolases"/>
    <property type="match status" value="1"/>
</dbReference>
<dbReference type="SUPFAM" id="SSF46785">
    <property type="entry name" value="Winged helix' DNA-binding domain"/>
    <property type="match status" value="1"/>
</dbReference>
<dbReference type="PROSITE" id="PS50901">
    <property type="entry name" value="FTSK"/>
    <property type="match status" value="1"/>
</dbReference>
<feature type="chain" id="PRO_0000098239" description="DNA translocase SpoIIIE">
    <location>
        <begin position="1"/>
        <end position="787"/>
    </location>
</feature>
<feature type="transmembrane region" description="Helical" evidence="1">
    <location>
        <begin position="22"/>
        <end position="42"/>
    </location>
</feature>
<feature type="transmembrane region" description="Helical" evidence="1">
    <location>
        <begin position="51"/>
        <end position="71"/>
    </location>
</feature>
<feature type="transmembrane region" description="Helical" evidence="1">
    <location>
        <begin position="87"/>
        <end position="107"/>
    </location>
</feature>
<feature type="transmembrane region" description="Helical" evidence="1">
    <location>
        <begin position="154"/>
        <end position="174"/>
    </location>
</feature>
<feature type="topological domain" description="Cytoplasmic" evidence="1">
    <location>
        <begin position="175"/>
        <end position="787"/>
    </location>
</feature>
<feature type="domain" description="FtsK" evidence="2">
    <location>
        <begin position="450"/>
        <end position="646"/>
    </location>
</feature>
<feature type="region of interest" description="Disordered" evidence="3">
    <location>
        <begin position="213"/>
        <end position="279"/>
    </location>
</feature>
<feature type="compositionally biased region" description="Basic residues" evidence="3">
    <location>
        <begin position="218"/>
        <end position="233"/>
    </location>
</feature>
<feature type="binding site" evidence="18">
    <location>
        <begin position="470"/>
        <end position="475"/>
    </location>
    <ligand>
        <name>ATP</name>
        <dbReference type="ChEBI" id="CHEBI:30616"/>
    </ligand>
</feature>
<feature type="mutagenesis site" description="In SpoIIIE-73-11; defects in DNA translocation. Can complete engulfment and membrane fusion.">
    <original>G</original>
    <variation>S</variation>
    <location>
        <position position="467"/>
    </location>
</feature>
<feature type="mutagenesis site" description="Abolishes ATP-binding and DNA translocation." evidence="5">
    <original>K</original>
    <variation>A</variation>
    <location>
        <position position="473"/>
    </location>
</feature>
<feature type="mutagenesis site" description="Decrease in DNA transport." evidence="12">
    <original>D</original>
    <variation>A</variation>
    <location>
        <position position="584"/>
    </location>
</feature>
<feature type="sequence conflict" description="In Ref. 1; AAA22784." evidence="18" ref="1">
    <original>KL</original>
    <variation>NV</variation>
    <location>
        <begin position="439"/>
        <end position="440"/>
    </location>
</feature>
<reference key="1">
    <citation type="journal article" date="1987" name="J. Gen. Microbiol.">
        <title>Nucleotide sequence of the sporulation operon, spoIIIE, of Bacillus subtilis.</title>
        <authorList>
            <person name="Butler P.D."/>
            <person name="Mandelstam J."/>
        </authorList>
    </citation>
    <scope>NUCLEOTIDE SEQUENCE [GENOMIC DNA]</scope>
    <source>
        <strain>168</strain>
    </source>
</reference>
<reference key="2">
    <citation type="journal article" date="1989" name="Mol. Microbiol.">
        <title>The role of the sporulation gene spoIIIE in the regulation of prespore-specific gene expression in Bacillus subtilis.</title>
        <authorList>
            <person name="Foulger D."/>
            <person name="Errington J."/>
        </authorList>
    </citation>
    <scope>SEQUENCE REVISION</scope>
</reference>
<reference key="3">
    <citation type="journal article" date="1997" name="Nature">
        <title>The complete genome sequence of the Gram-positive bacterium Bacillus subtilis.</title>
        <authorList>
            <person name="Kunst F."/>
            <person name="Ogasawara N."/>
            <person name="Moszer I."/>
            <person name="Albertini A.M."/>
            <person name="Alloni G."/>
            <person name="Azevedo V."/>
            <person name="Bertero M.G."/>
            <person name="Bessieres P."/>
            <person name="Bolotin A."/>
            <person name="Borchert S."/>
            <person name="Borriss R."/>
            <person name="Boursier L."/>
            <person name="Brans A."/>
            <person name="Braun M."/>
            <person name="Brignell S.C."/>
            <person name="Bron S."/>
            <person name="Brouillet S."/>
            <person name="Bruschi C.V."/>
            <person name="Caldwell B."/>
            <person name="Capuano V."/>
            <person name="Carter N.M."/>
            <person name="Choi S.-K."/>
            <person name="Codani J.-J."/>
            <person name="Connerton I.F."/>
            <person name="Cummings N.J."/>
            <person name="Daniel R.A."/>
            <person name="Denizot F."/>
            <person name="Devine K.M."/>
            <person name="Duesterhoeft A."/>
            <person name="Ehrlich S.D."/>
            <person name="Emmerson P.T."/>
            <person name="Entian K.-D."/>
            <person name="Errington J."/>
            <person name="Fabret C."/>
            <person name="Ferrari E."/>
            <person name="Foulger D."/>
            <person name="Fritz C."/>
            <person name="Fujita M."/>
            <person name="Fujita Y."/>
            <person name="Fuma S."/>
            <person name="Galizzi A."/>
            <person name="Galleron N."/>
            <person name="Ghim S.-Y."/>
            <person name="Glaser P."/>
            <person name="Goffeau A."/>
            <person name="Golightly E.J."/>
            <person name="Grandi G."/>
            <person name="Guiseppi G."/>
            <person name="Guy B.J."/>
            <person name="Haga K."/>
            <person name="Haiech J."/>
            <person name="Harwood C.R."/>
            <person name="Henaut A."/>
            <person name="Hilbert H."/>
            <person name="Holsappel S."/>
            <person name="Hosono S."/>
            <person name="Hullo M.-F."/>
            <person name="Itaya M."/>
            <person name="Jones L.-M."/>
            <person name="Joris B."/>
            <person name="Karamata D."/>
            <person name="Kasahara Y."/>
            <person name="Klaerr-Blanchard M."/>
            <person name="Klein C."/>
            <person name="Kobayashi Y."/>
            <person name="Koetter P."/>
            <person name="Koningstein G."/>
            <person name="Krogh S."/>
            <person name="Kumano M."/>
            <person name="Kurita K."/>
            <person name="Lapidus A."/>
            <person name="Lardinois S."/>
            <person name="Lauber J."/>
            <person name="Lazarevic V."/>
            <person name="Lee S.-M."/>
            <person name="Levine A."/>
            <person name="Liu H."/>
            <person name="Masuda S."/>
            <person name="Mauel C."/>
            <person name="Medigue C."/>
            <person name="Medina N."/>
            <person name="Mellado R.P."/>
            <person name="Mizuno M."/>
            <person name="Moestl D."/>
            <person name="Nakai S."/>
            <person name="Noback M."/>
            <person name="Noone D."/>
            <person name="O'Reilly M."/>
            <person name="Ogawa K."/>
            <person name="Ogiwara A."/>
            <person name="Oudega B."/>
            <person name="Park S.-H."/>
            <person name="Parro V."/>
            <person name="Pohl T.M."/>
            <person name="Portetelle D."/>
            <person name="Porwollik S."/>
            <person name="Prescott A.M."/>
            <person name="Presecan E."/>
            <person name="Pujic P."/>
            <person name="Purnelle B."/>
            <person name="Rapoport G."/>
            <person name="Rey M."/>
            <person name="Reynolds S."/>
            <person name="Rieger M."/>
            <person name="Rivolta C."/>
            <person name="Rocha E."/>
            <person name="Roche B."/>
            <person name="Rose M."/>
            <person name="Sadaie Y."/>
            <person name="Sato T."/>
            <person name="Scanlan E."/>
            <person name="Schleich S."/>
            <person name="Schroeter R."/>
            <person name="Scoffone F."/>
            <person name="Sekiguchi J."/>
            <person name="Sekowska A."/>
            <person name="Seror S.J."/>
            <person name="Serror P."/>
            <person name="Shin B.-S."/>
            <person name="Soldo B."/>
            <person name="Sorokin A."/>
            <person name="Tacconi E."/>
            <person name="Takagi T."/>
            <person name="Takahashi H."/>
            <person name="Takemaru K."/>
            <person name="Takeuchi M."/>
            <person name="Tamakoshi A."/>
            <person name="Tanaka T."/>
            <person name="Terpstra P."/>
            <person name="Tognoni A."/>
            <person name="Tosato V."/>
            <person name="Uchiyama S."/>
            <person name="Vandenbol M."/>
            <person name="Vannier F."/>
            <person name="Vassarotti A."/>
            <person name="Viari A."/>
            <person name="Wambutt R."/>
            <person name="Wedler E."/>
            <person name="Wedler H."/>
            <person name="Weitzenegger T."/>
            <person name="Winters P."/>
            <person name="Wipat A."/>
            <person name="Yamamoto H."/>
            <person name="Yamane K."/>
            <person name="Yasumoto K."/>
            <person name="Yata K."/>
            <person name="Yoshida K."/>
            <person name="Yoshikawa H.-F."/>
            <person name="Zumstein E."/>
            <person name="Yoshikawa H."/>
            <person name="Danchin A."/>
        </authorList>
    </citation>
    <scope>NUCLEOTIDE SEQUENCE [LARGE SCALE GENOMIC DNA]</scope>
    <source>
        <strain>168</strain>
    </source>
</reference>
<reference key="4">
    <citation type="journal article" date="2009" name="Microbiology">
        <title>From a consortium sequence to a unified sequence: the Bacillus subtilis 168 reference genome a decade later.</title>
        <authorList>
            <person name="Barbe V."/>
            <person name="Cruveiller S."/>
            <person name="Kunst F."/>
            <person name="Lenoble P."/>
            <person name="Meurice G."/>
            <person name="Sekowska A."/>
            <person name="Vallenet D."/>
            <person name="Wang T."/>
            <person name="Moszer I."/>
            <person name="Medigue C."/>
            <person name="Danchin A."/>
        </authorList>
    </citation>
    <scope>SEQUENCE REVISION TO 439-440</scope>
</reference>
<reference key="5">
    <citation type="journal article" date="1994" name="Science">
        <title>Bacillus subtilis spoIIIE protein required for DNA segregation during asymmetric cell division.</title>
        <authorList>
            <person name="Wu L.J."/>
            <person name="Errington J."/>
        </authorList>
    </citation>
    <scope>CHARACTERIZATION</scope>
</reference>
<reference key="6">
    <citation type="journal article" date="1999" name="Proc. Natl. Acad. Sci. U.S.A.">
        <title>An in vivo membrane fusion assay implicates SpoIIIE in the final stages of engulfment during Bacillus subtilis sporulation.</title>
        <authorList>
            <person name="Sharp M.D."/>
            <person name="Pogliano K."/>
        </authorList>
    </citation>
    <scope>FUNCTION</scope>
    <scope>SUBCELLULAR LOCATION</scope>
    <scope>DISRUPTION PHENOTYPE</scope>
    <scope>MUTANT SPOIIIE-73-11</scope>
    <source>
        <strain>168 / PY79</strain>
    </source>
</reference>
<reference key="7">
    <citation type="journal article" date="2000" name="Science">
        <title>Role of Bacillus subtilis SpoIIIE in DNA transport across the mother cell-prespore division septum.</title>
        <authorList>
            <person name="Bath J."/>
            <person name="Wu L.J."/>
            <person name="Errington J."/>
            <person name="Wang J.C."/>
        </authorList>
    </citation>
    <scope>FUNCTION</scope>
    <scope>ATP-BINDING</scope>
    <scope>MUTAGENESIS OF LYS-473</scope>
</reference>
<reference key="8">
    <citation type="journal article" date="2002" name="Science">
        <title>Role of cell-specific SpoIIIE assembly in polarity of DNA transfer.</title>
        <authorList>
            <person name="Sharp M.D."/>
            <person name="Pogliano K."/>
        </authorList>
    </citation>
    <scope>FUNCTION</scope>
</reference>
<reference key="9">
    <citation type="journal article" date="2003" name="J. Bacteriol.">
        <title>The membrane domain of SpoIIIE is required for membrane fusion during Bacillus subtilis sporulation.</title>
        <authorList>
            <person name="Sharp M.D."/>
            <person name="Pogliano K."/>
        </authorList>
    </citation>
    <scope>FUNCTION IN MEMBRANE FUSION</scope>
    <source>
        <strain>168 / PY79</strain>
    </source>
</reference>
<reference key="10">
    <citation type="journal article" date="2006" name="Mol. Microbiol.">
        <title>Evidence that the SpoIIIE DNA translocase participates in membrane fusion during cytokinesis and engulfment.</title>
        <authorList>
            <person name="Liu N.J."/>
            <person name="Dutton R.J."/>
            <person name="Pogliano K."/>
        </authorList>
    </citation>
    <scope>FUNCTION IN MEMBRANE FUSION</scope>
    <scope>SUBCELLULAR LOCATION</scope>
    <source>
        <strain>168 / PY79</strain>
    </source>
</reference>
<reference key="11">
    <citation type="journal article" date="2007" name="Cell">
        <title>The ATPase SpoIIIE transports DNA across fused septal membranes during sporulation in Bacillus subtilis.</title>
        <authorList>
            <person name="Burton B.M."/>
            <person name="Marquis K.A."/>
            <person name="Sullivan N.L."/>
            <person name="Rapoport T.A."/>
            <person name="Rudner D.Z."/>
        </authorList>
    </citation>
    <scope>FUNCTION IN DNA TRANSLOCATION</scope>
    <scope>SUBUNIT</scope>
    <scope>MUTAGENESIS OF ASP-584</scope>
    <source>
        <strain>168 / PY79</strain>
    </source>
</reference>
<reference key="12">
    <citation type="journal article" date="2007" name="J. Bacteriol.">
        <title>Separation of chromosome termini during sporulation of Bacillus subtilis depends on SpoIIIE.</title>
        <authorList>
            <person name="Bogush M."/>
            <person name="Xenopoulos P."/>
            <person name="Piggot P.J."/>
        </authorList>
    </citation>
    <scope>FUNCTION IN SEPARATION OF CHROMOSOME TERMINI</scope>
    <source>
        <strain>168 / BR151</strain>
    </source>
</reference>
<reference key="13">
    <citation type="journal article" date="2007" name="Mol. Microbiol.">
        <title>FtsK and SpoIIIE: the tale of the conserved tails.</title>
        <authorList>
            <person name="Barre F.X."/>
        </authorList>
    </citation>
    <scope>DOMAIN</scope>
</reference>
<reference key="14">
    <citation type="journal article" date="2007" name="Mol. Microbiol.">
        <title>Cell-specific SpoIIIE assembly and DNA translocation polarity are dictated by chromosome orientation.</title>
        <authorList>
            <person name="Becker E.C."/>
            <person name="Pogliano K."/>
        </authorList>
    </citation>
    <scope>FUNCTION IN DNA TRANSLOCATION</scope>
    <source>
        <strain>168 / PY79</strain>
    </source>
</reference>
<reference key="15">
    <citation type="journal article" date="2008" name="Genes Dev.">
        <title>SpoIIIE strips proteins off the DNA during chromosome translocation.</title>
        <authorList>
            <person name="Marquis K.A."/>
            <person name="Burton B.M."/>
            <person name="Nollmann M."/>
            <person name="Ptacin J.L."/>
            <person name="Bustamante C."/>
            <person name="Ben-Yehuda S."/>
            <person name="Rudner D.Z."/>
        </authorList>
    </citation>
    <scope>FUNCTION</scope>
    <source>
        <strain>168 / PY79</strain>
    </source>
</reference>
<reference key="16">
    <citation type="journal article" date="2008" name="Nat. Struct. Mol. Biol.">
        <title>Sequence-directed DNA export guides chromosome translocation during sporulation in Bacillus subtilis.</title>
        <authorList>
            <person name="Ptacin J.L."/>
            <person name="Nollmann M."/>
            <person name="Becker E.C."/>
            <person name="Cozzarelli N.R."/>
            <person name="Pogliano K."/>
            <person name="Bustamante C."/>
        </authorList>
    </citation>
    <scope>FUNCTION</scope>
    <scope>SUBCELLULAR LOCATION</scope>
    <scope>DOMAIN</scope>
    <source>
        <strain>168 / PY79</strain>
    </source>
</reference>
<reference key="17">
    <citation type="journal article" date="2008" name="Curr. Biol.">
        <title>Sporulation: SpoIIIE is the key to cell differentiation.</title>
        <authorList>
            <person name="Grainge I."/>
        </authorList>
    </citation>
    <scope>REVIEW</scope>
</reference>
<reference key="18">
    <citation type="journal article" date="2009" name="Mol. Microbiol.">
        <title>The Bacillus subtilis SftA (YtpS) and SpoIIIE DNA translocases play distinct roles in growing cells to ensure faithful chromosome partitioning.</title>
        <authorList>
            <person name="Biller S.J."/>
            <person name="Burkholder W.F."/>
        </authorList>
    </citation>
    <scope>FUNCTION</scope>
    <scope>SUBCELLULAR LOCATION</scope>
</reference>
<reference key="19">
    <citation type="journal article" date="2009" name="Mol. Microbiol.">
        <title>SpoIIIE and a novel type of DNA translocase, SftA, couple chromosome segregation with cell division in Bacillus subtilis.</title>
        <authorList>
            <person name="Kaimer C."/>
            <person name="Gonzalez-Pastor J.E."/>
            <person name="Graumann P.L."/>
        </authorList>
    </citation>
    <scope>FUNCTION IN VEGETATIVE GROWTH</scope>
    <scope>SUBCELLULAR LOCATION</scope>
    <source>
        <strain>168 / PY79</strain>
    </source>
</reference>
<reference key="20">
    <citation type="journal article" date="2010" name="Genes Dev.">
        <title>Dynamic SpoIIIE assembly mediates septal membrane fission during Bacillus subtilis sporulation.</title>
        <authorList>
            <person name="Fleming T.C."/>
            <person name="Shin J.Y."/>
            <person name="Lee S.H."/>
            <person name="Becker E."/>
            <person name="Huang K.C."/>
            <person name="Bustamante C."/>
            <person name="Pogliano K."/>
        </authorList>
    </citation>
    <scope>FUNCTION IN SEPTAL MEMBRANE FUSION</scope>
    <source>
        <strain>168 / PY79</strain>
    </source>
</reference>
<keyword id="KW-0067">ATP-binding</keyword>
<keyword id="KW-0131">Cell cycle</keyword>
<keyword id="KW-0132">Cell division</keyword>
<keyword id="KW-1003">Cell membrane</keyword>
<keyword id="KW-0159">Chromosome partition</keyword>
<keyword id="KW-0238">DNA-binding</keyword>
<keyword id="KW-0472">Membrane</keyword>
<keyword id="KW-0547">Nucleotide-binding</keyword>
<keyword id="KW-1185">Reference proteome</keyword>
<keyword id="KW-0749">Sporulation</keyword>
<keyword id="KW-0812">Transmembrane</keyword>
<keyword id="KW-1133">Transmembrane helix</keyword>
<proteinExistence type="evidence at protein level"/>
<organism>
    <name type="scientific">Bacillus subtilis (strain 168)</name>
    <dbReference type="NCBI Taxonomy" id="224308"/>
    <lineage>
        <taxon>Bacteria</taxon>
        <taxon>Bacillati</taxon>
        <taxon>Bacillota</taxon>
        <taxon>Bacilli</taxon>
        <taxon>Bacillales</taxon>
        <taxon>Bacillaceae</taxon>
        <taxon>Bacillus</taxon>
    </lineage>
</organism>
<comment type="function">
    <text evidence="4 5 6 7 8 9 11 12 13 14 15 16 17">Plays an essential role during sporulation. Required for the translocation of the chromosomal DNA from mother cell into the forespore during polar septation, for the final steps of compartmentalization in the presence of trapped DNA, and for the final steps of engulfment. The N-terminus mediates localization to the division septum and is required for both septal membrane fusion and engulfment membrane fusion. May form DNA-conducting channels across the two lipid bilayers of the septum after cell division. The C-terminus functions as a DNA motor that exports DNA in an ATP-dependent manner from mother cell into the forespore. DNA-binding proteins are stripped off the chromosome during translocation, which may play a key role in reprogramming developmental gene expression in the forespore. The two arms of the chromosome are simultaneously pumped into the forespore, which suggests that the septum contains at least two channels, one for each arm. Required for separation of chromosome termini. Also required for optimal chromosome partitioning in vegetative cells, by actively moving chromosomal DNA trapped within the division septum into the daughter cells.</text>
</comment>
<comment type="subunit">
    <text evidence="12">Homohexamer. Forms a ring that surrounds DNA. Assembles into complexes that could contain two hexamers.</text>
</comment>
<comment type="subcellular location">
    <subcellularLocation>
        <location evidence="4 8 13 15 16">Cell membrane</location>
        <topology evidence="4 8 13 15 16">Multi-pass membrane protein</topology>
    </subcellularLocation>
    <text>Localizes to the middle of the sporulation septum, then moves to the forespore pole before the completion of engulfment. Delocalizes after membrane fusion is complete. During sporulation, is exclusively assembled on the mother-cell side of the septum. During vegetative growth, assembles at the division septum when DNA is entrapped in the membranes.</text>
</comment>
<comment type="domain">
    <text evidence="10 13">Consists of an N-terminal domain, followed by a linker domain, and a C-terminal domain, which forms the translocation motor involved in chromosome segregation. The C-terminal domain can be further subdivided into alpha, beta and gamma subdomains. Specific interactions between the gamma subdomain and specific SpoIIIE recognition sequences (SRS) regulate the compartment-specific activation of a mother-cell SpoIIIE complex. Interactions with nonpermissive SRS in the forespore lead to inactivation of the complex.</text>
</comment>
<comment type="disruption phenotype">
    <text evidence="4">Cells lacking this gene show a chromosome translocation defect and aberrant compartmentalization of both sigma-F and sigma-E, and fail to complete membrane fusion at the end of engulfment.</text>
</comment>
<comment type="similarity">
    <text evidence="18">Belongs to the FtsK/SpoIIIE/SftA family.</text>
</comment>
<sequence length="787" mass="87181">MAKKKRKSRKKQAKQLNIKYELNGLLCIAISIIAILQLGVVGQTFIYLFRFFAGEWFILCLLGLLVLGVSLFWKKKTPSLLTRRKAGLYCIIASILLLSHVQLFKNLTHKGSIESASVVRNTWELFLMDMNGSSASPDLGGGMIGALLFAASHFLFASTGSQIMAIVMILIGMILVTGRSLQETLKKWMSPIGRFIKEQWLAFIDDMKSFKSNMQSSKKTKAPSKKQKPARKKQQMEPEPPDEEGDYETVSPLIHSEPIISSFSDRNEEEESPVIEKRAEPVSKPLQDIQPETGDQETVSAPPMTFTELENKDYEMPSLDLLADPKHTGQQADKKNIYENARKLERTFQSFGVKAKVTQVHLGPAVTKYEVYPDVGVKVSKIVNLSDDLALALAAKDIRIEAPIPGKSAIGIEVPNAEVAMVSLKEVLESKLNDRPDAKLLIGLGRNISGEAVLAELNKMPHLLVAGATGSGKSVCVNGIITSILMRAKPHEVKMMMIDPKMVELNVYNGIPHLLAPVVTDPKKASQALKKVVNEMERRYELFSHTGTRNIEGYNDYIKRANNEEGAKQPELPYIVVIVDELADLMMVASSDVEDSITRLSQMARAAGIHLIIATQRPSVDVITGVIKANIPSRIAFSVSSQTDSRTILDMGGAEKLLGRGDMLFLPVGANKPVRVQGAFLSDDEVEKVVDHVITQQKAQYQEEMIPEETTETHSEVTDELYDEAVELIVGMQTASVSMLQRRFRIGYTRAARLIDAMEERGVVGPYEGSKPREVLLSKEKYDELSS</sequence>
<protein>
    <recommendedName>
        <fullName>DNA translocase SpoIIIE</fullName>
    </recommendedName>
    <alternativeName>
        <fullName>Stage III sporulation protein E</fullName>
    </alternativeName>
</protein>
<gene>
    <name type="primary">spoIIIE</name>
    <name type="synonym">ftsK</name>
    <name type="ordered locus">BSU16800</name>
</gene>